<evidence type="ECO:0000255" key="1">
    <source>
        <dbReference type="HAMAP-Rule" id="MF_00158"/>
    </source>
</evidence>
<name>PANC_GEOKA</name>
<sequence>MIVMDQIAAMQALMRQYRREGKTIGFVPTMGYLHEGHTSLIDRARAENDIVVLSVFVNPLQFGPNEDFARYPRDFERDRRIAEQHGVDVLFHPEADEMYPEPLTVRAIVQARADVLCGRSRPGHFDGVATVLMKLFNIVMPDRAYFGMKDAQQVAVVDGLIRDLNFPIELVPVPTVREADGLAKSSRNVYLSPQERSEAPALYAALQAAASAVERGERSAAAIRRMVREHIEAHTHAEIDYVEVCSYPDLTPLETLAGTVLIAVAVRFASARLIDNIMIELPKTGEQGDGKGEQACFARS</sequence>
<organism>
    <name type="scientific">Geobacillus kaustophilus (strain HTA426)</name>
    <dbReference type="NCBI Taxonomy" id="235909"/>
    <lineage>
        <taxon>Bacteria</taxon>
        <taxon>Bacillati</taxon>
        <taxon>Bacillota</taxon>
        <taxon>Bacilli</taxon>
        <taxon>Bacillales</taxon>
        <taxon>Anoxybacillaceae</taxon>
        <taxon>Geobacillus</taxon>
        <taxon>Geobacillus thermoleovorans group</taxon>
    </lineage>
</organism>
<dbReference type="EC" id="6.3.2.1" evidence="1"/>
<dbReference type="EMBL" id="BA000043">
    <property type="protein sequence ID" value="BAD76463.1"/>
    <property type="molecule type" value="Genomic_DNA"/>
</dbReference>
<dbReference type="RefSeq" id="WP_011231663.1">
    <property type="nucleotide sequence ID" value="NC_006510.1"/>
</dbReference>
<dbReference type="SMR" id="Q5KXX3"/>
<dbReference type="STRING" id="235909.GK2178"/>
<dbReference type="KEGG" id="gka:GK2178"/>
<dbReference type="eggNOG" id="COG0414">
    <property type="taxonomic scope" value="Bacteria"/>
</dbReference>
<dbReference type="HOGENOM" id="CLU_047148_0_0_9"/>
<dbReference type="UniPathway" id="UPA00028">
    <property type="reaction ID" value="UER00005"/>
</dbReference>
<dbReference type="Proteomes" id="UP000001172">
    <property type="component" value="Chromosome"/>
</dbReference>
<dbReference type="GO" id="GO:0005829">
    <property type="term" value="C:cytosol"/>
    <property type="evidence" value="ECO:0007669"/>
    <property type="project" value="TreeGrafter"/>
</dbReference>
<dbReference type="GO" id="GO:0005524">
    <property type="term" value="F:ATP binding"/>
    <property type="evidence" value="ECO:0007669"/>
    <property type="project" value="UniProtKB-KW"/>
</dbReference>
<dbReference type="GO" id="GO:0004592">
    <property type="term" value="F:pantoate-beta-alanine ligase activity"/>
    <property type="evidence" value="ECO:0007669"/>
    <property type="project" value="UniProtKB-UniRule"/>
</dbReference>
<dbReference type="GO" id="GO:0015940">
    <property type="term" value="P:pantothenate biosynthetic process"/>
    <property type="evidence" value="ECO:0007669"/>
    <property type="project" value="UniProtKB-UniRule"/>
</dbReference>
<dbReference type="CDD" id="cd00560">
    <property type="entry name" value="PanC"/>
    <property type="match status" value="1"/>
</dbReference>
<dbReference type="FunFam" id="3.30.1300.10:FF:000001">
    <property type="entry name" value="Pantothenate synthetase"/>
    <property type="match status" value="1"/>
</dbReference>
<dbReference type="FunFam" id="3.40.50.620:FF:000013">
    <property type="entry name" value="Pantothenate synthetase"/>
    <property type="match status" value="1"/>
</dbReference>
<dbReference type="Gene3D" id="3.40.50.620">
    <property type="entry name" value="HUPs"/>
    <property type="match status" value="1"/>
</dbReference>
<dbReference type="Gene3D" id="3.30.1300.10">
    <property type="entry name" value="Pantoate-beta-alanine ligase, C-terminal domain"/>
    <property type="match status" value="1"/>
</dbReference>
<dbReference type="HAMAP" id="MF_00158">
    <property type="entry name" value="PanC"/>
    <property type="match status" value="1"/>
</dbReference>
<dbReference type="InterPro" id="IPR004821">
    <property type="entry name" value="Cyt_trans-like"/>
</dbReference>
<dbReference type="InterPro" id="IPR003721">
    <property type="entry name" value="Pantoate_ligase"/>
</dbReference>
<dbReference type="InterPro" id="IPR042176">
    <property type="entry name" value="Pantoate_ligase_C"/>
</dbReference>
<dbReference type="InterPro" id="IPR014729">
    <property type="entry name" value="Rossmann-like_a/b/a_fold"/>
</dbReference>
<dbReference type="NCBIfam" id="TIGR00125">
    <property type="entry name" value="cyt_tran_rel"/>
    <property type="match status" value="1"/>
</dbReference>
<dbReference type="NCBIfam" id="TIGR00018">
    <property type="entry name" value="panC"/>
    <property type="match status" value="1"/>
</dbReference>
<dbReference type="PANTHER" id="PTHR21299">
    <property type="entry name" value="CYTIDYLATE KINASE/PANTOATE-BETA-ALANINE LIGASE"/>
    <property type="match status" value="1"/>
</dbReference>
<dbReference type="PANTHER" id="PTHR21299:SF1">
    <property type="entry name" value="PANTOATE--BETA-ALANINE LIGASE"/>
    <property type="match status" value="1"/>
</dbReference>
<dbReference type="Pfam" id="PF02569">
    <property type="entry name" value="Pantoate_ligase"/>
    <property type="match status" value="1"/>
</dbReference>
<dbReference type="SUPFAM" id="SSF52374">
    <property type="entry name" value="Nucleotidylyl transferase"/>
    <property type="match status" value="1"/>
</dbReference>
<reference key="1">
    <citation type="journal article" date="2004" name="Nucleic Acids Res.">
        <title>Thermoadaptation trait revealed by the genome sequence of thermophilic Geobacillus kaustophilus.</title>
        <authorList>
            <person name="Takami H."/>
            <person name="Takaki Y."/>
            <person name="Chee G.-J."/>
            <person name="Nishi S."/>
            <person name="Shimamura S."/>
            <person name="Suzuki H."/>
            <person name="Matsui S."/>
            <person name="Uchiyama I."/>
        </authorList>
    </citation>
    <scope>NUCLEOTIDE SEQUENCE [LARGE SCALE GENOMIC DNA]</scope>
    <source>
        <strain>HTA426</strain>
    </source>
</reference>
<accession>Q5KXX3</accession>
<proteinExistence type="inferred from homology"/>
<gene>
    <name evidence="1" type="primary">panC</name>
    <name type="ordered locus">GK2178</name>
</gene>
<comment type="function">
    <text evidence="1">Catalyzes the condensation of pantoate with beta-alanine in an ATP-dependent reaction via a pantoyl-adenylate intermediate.</text>
</comment>
<comment type="catalytic activity">
    <reaction evidence="1">
        <text>(R)-pantoate + beta-alanine + ATP = (R)-pantothenate + AMP + diphosphate + H(+)</text>
        <dbReference type="Rhea" id="RHEA:10912"/>
        <dbReference type="ChEBI" id="CHEBI:15378"/>
        <dbReference type="ChEBI" id="CHEBI:15980"/>
        <dbReference type="ChEBI" id="CHEBI:29032"/>
        <dbReference type="ChEBI" id="CHEBI:30616"/>
        <dbReference type="ChEBI" id="CHEBI:33019"/>
        <dbReference type="ChEBI" id="CHEBI:57966"/>
        <dbReference type="ChEBI" id="CHEBI:456215"/>
        <dbReference type="EC" id="6.3.2.1"/>
    </reaction>
</comment>
<comment type="pathway">
    <text evidence="1">Cofactor biosynthesis; (R)-pantothenate biosynthesis; (R)-pantothenate from (R)-pantoate and beta-alanine: step 1/1.</text>
</comment>
<comment type="subunit">
    <text evidence="1">Homodimer.</text>
</comment>
<comment type="subcellular location">
    <subcellularLocation>
        <location evidence="1">Cytoplasm</location>
    </subcellularLocation>
</comment>
<comment type="miscellaneous">
    <text evidence="1">The reaction proceeds by a bi uni uni bi ping pong mechanism.</text>
</comment>
<comment type="similarity">
    <text evidence="1">Belongs to the pantothenate synthetase family.</text>
</comment>
<protein>
    <recommendedName>
        <fullName evidence="1">Pantothenate synthetase</fullName>
        <shortName evidence="1">PS</shortName>
        <ecNumber evidence="1">6.3.2.1</ecNumber>
    </recommendedName>
    <alternativeName>
        <fullName evidence="1">Pantoate--beta-alanine ligase</fullName>
    </alternativeName>
    <alternativeName>
        <fullName evidence="1">Pantoate-activating enzyme</fullName>
    </alternativeName>
</protein>
<feature type="chain" id="PRO_0000128232" description="Pantothenate synthetase">
    <location>
        <begin position="1"/>
        <end position="300"/>
    </location>
</feature>
<feature type="active site" description="Proton donor" evidence="1">
    <location>
        <position position="37"/>
    </location>
</feature>
<feature type="binding site" evidence="1">
    <location>
        <begin position="30"/>
        <end position="37"/>
    </location>
    <ligand>
        <name>ATP</name>
        <dbReference type="ChEBI" id="CHEBI:30616"/>
    </ligand>
</feature>
<feature type="binding site" evidence="1">
    <location>
        <position position="61"/>
    </location>
    <ligand>
        <name>(R)-pantoate</name>
        <dbReference type="ChEBI" id="CHEBI:15980"/>
    </ligand>
</feature>
<feature type="binding site" evidence="1">
    <location>
        <position position="61"/>
    </location>
    <ligand>
        <name>beta-alanine</name>
        <dbReference type="ChEBI" id="CHEBI:57966"/>
    </ligand>
</feature>
<feature type="binding site" evidence="1">
    <location>
        <begin position="147"/>
        <end position="150"/>
    </location>
    <ligand>
        <name>ATP</name>
        <dbReference type="ChEBI" id="CHEBI:30616"/>
    </ligand>
</feature>
<feature type="binding site" evidence="1">
    <location>
        <position position="153"/>
    </location>
    <ligand>
        <name>(R)-pantoate</name>
        <dbReference type="ChEBI" id="CHEBI:15980"/>
    </ligand>
</feature>
<feature type="binding site" evidence="1">
    <location>
        <position position="176"/>
    </location>
    <ligand>
        <name>ATP</name>
        <dbReference type="ChEBI" id="CHEBI:30616"/>
    </ligand>
</feature>
<feature type="binding site" evidence="1">
    <location>
        <begin position="184"/>
        <end position="187"/>
    </location>
    <ligand>
        <name>ATP</name>
        <dbReference type="ChEBI" id="CHEBI:30616"/>
    </ligand>
</feature>
<keyword id="KW-0067">ATP-binding</keyword>
<keyword id="KW-0963">Cytoplasm</keyword>
<keyword id="KW-0436">Ligase</keyword>
<keyword id="KW-0547">Nucleotide-binding</keyword>
<keyword id="KW-0566">Pantothenate biosynthesis</keyword>
<keyword id="KW-1185">Reference proteome</keyword>